<dbReference type="EC" id="3.4.11.1"/>
<dbReference type="EC" id="3.4.11.5"/>
<dbReference type="EMBL" id="X77015">
    <property type="protein sequence ID" value="CAA54314.1"/>
    <property type="molecule type" value="mRNA"/>
</dbReference>
<dbReference type="EMBL" id="X67845">
    <property type="protein sequence ID" value="CAA48038.1"/>
    <property type="molecule type" value="mRNA"/>
</dbReference>
<dbReference type="PIR" id="S41376">
    <property type="entry name" value="S41376"/>
</dbReference>
<dbReference type="RefSeq" id="NP_001305566.1">
    <property type="nucleotide sequence ID" value="NM_001318637.1"/>
</dbReference>
<dbReference type="SMR" id="P31427"/>
<dbReference type="STRING" id="4113.P31427"/>
<dbReference type="MEROPS" id="M17.002"/>
<dbReference type="GeneID" id="102595887"/>
<dbReference type="KEGG" id="sot:102595887"/>
<dbReference type="InParanoid" id="P31427"/>
<dbReference type="OrthoDB" id="412814at2759"/>
<dbReference type="Proteomes" id="UP000011115">
    <property type="component" value="Unassembled WGS sequence"/>
</dbReference>
<dbReference type="ExpressionAtlas" id="P31427">
    <property type="expression patterns" value="baseline and differential"/>
</dbReference>
<dbReference type="GO" id="GO:0009507">
    <property type="term" value="C:chloroplast"/>
    <property type="evidence" value="ECO:0007669"/>
    <property type="project" value="UniProtKB-SubCell"/>
</dbReference>
<dbReference type="GO" id="GO:0005737">
    <property type="term" value="C:cytoplasm"/>
    <property type="evidence" value="ECO:0000318"/>
    <property type="project" value="GO_Central"/>
</dbReference>
<dbReference type="GO" id="GO:0030145">
    <property type="term" value="F:manganese ion binding"/>
    <property type="evidence" value="ECO:0000250"/>
    <property type="project" value="UniProtKB"/>
</dbReference>
<dbReference type="GO" id="GO:0070006">
    <property type="term" value="F:metalloaminopeptidase activity"/>
    <property type="evidence" value="ECO:0007669"/>
    <property type="project" value="InterPro"/>
</dbReference>
<dbReference type="GO" id="GO:0008233">
    <property type="term" value="F:peptidase activity"/>
    <property type="evidence" value="ECO:0000318"/>
    <property type="project" value="GO_Central"/>
</dbReference>
<dbReference type="GO" id="GO:0006508">
    <property type="term" value="P:proteolysis"/>
    <property type="evidence" value="ECO:0000318"/>
    <property type="project" value="GO_Central"/>
</dbReference>
<dbReference type="CDD" id="cd00433">
    <property type="entry name" value="Peptidase_M17"/>
    <property type="match status" value="1"/>
</dbReference>
<dbReference type="FunFam" id="3.40.220.10:FF:000011">
    <property type="entry name" value="Leucine aminopeptidase 2, chloroplastic"/>
    <property type="match status" value="1"/>
</dbReference>
<dbReference type="FunFam" id="3.40.630.10:FF:000033">
    <property type="entry name" value="M17 leucyl aminopeptidase"/>
    <property type="match status" value="1"/>
</dbReference>
<dbReference type="Gene3D" id="3.40.220.10">
    <property type="entry name" value="Leucine Aminopeptidase, subunit E, domain 1"/>
    <property type="match status" value="1"/>
</dbReference>
<dbReference type="Gene3D" id="3.40.630.10">
    <property type="entry name" value="Zn peptidases"/>
    <property type="match status" value="1"/>
</dbReference>
<dbReference type="HAMAP" id="MF_00181">
    <property type="entry name" value="Cytosol_peptidase_M17"/>
    <property type="match status" value="1"/>
</dbReference>
<dbReference type="InterPro" id="IPR011356">
    <property type="entry name" value="Leucine_aapep/pepB"/>
</dbReference>
<dbReference type="InterPro" id="IPR043472">
    <property type="entry name" value="Macro_dom-like"/>
</dbReference>
<dbReference type="InterPro" id="IPR000819">
    <property type="entry name" value="Peptidase_M17_C"/>
</dbReference>
<dbReference type="InterPro" id="IPR023042">
    <property type="entry name" value="Peptidase_M17_leu_NH2_pept"/>
</dbReference>
<dbReference type="InterPro" id="IPR008283">
    <property type="entry name" value="Peptidase_M17_N"/>
</dbReference>
<dbReference type="NCBIfam" id="NF002076">
    <property type="entry name" value="PRK00913.2-3"/>
    <property type="match status" value="1"/>
</dbReference>
<dbReference type="PANTHER" id="PTHR11963:SF43">
    <property type="entry name" value="LEUCINE AMINOPEPTIDASE 1, CHLOROPLASTIC"/>
    <property type="match status" value="1"/>
</dbReference>
<dbReference type="PANTHER" id="PTHR11963">
    <property type="entry name" value="LEUCINE AMINOPEPTIDASE-RELATED"/>
    <property type="match status" value="1"/>
</dbReference>
<dbReference type="Pfam" id="PF00883">
    <property type="entry name" value="Peptidase_M17"/>
    <property type="match status" value="1"/>
</dbReference>
<dbReference type="Pfam" id="PF02789">
    <property type="entry name" value="Peptidase_M17_N"/>
    <property type="match status" value="1"/>
</dbReference>
<dbReference type="PRINTS" id="PR00481">
    <property type="entry name" value="LAMNOPPTDASE"/>
</dbReference>
<dbReference type="SUPFAM" id="SSF52949">
    <property type="entry name" value="Macro domain-like"/>
    <property type="match status" value="1"/>
</dbReference>
<dbReference type="SUPFAM" id="SSF53187">
    <property type="entry name" value="Zn-dependent exopeptidases"/>
    <property type="match status" value="1"/>
</dbReference>
<dbReference type="PROSITE" id="PS00631">
    <property type="entry name" value="CYTOSOL_AP"/>
    <property type="match status" value="1"/>
</dbReference>
<evidence type="ECO:0000250" key="1"/>
<evidence type="ECO:0000250" key="2">
    <source>
        <dbReference type="UniProtKB" id="P30184"/>
    </source>
</evidence>
<evidence type="ECO:0000250" key="3">
    <source>
        <dbReference type="UniProtKB" id="Q10712"/>
    </source>
</evidence>
<evidence type="ECO:0000255" key="4"/>
<evidence type="ECO:0000305" key="5"/>
<reference key="1">
    <citation type="journal article" date="1994" name="Planta">
        <title>Functional analysis of a leucine aminopeptidase from Solanum tuberosum L.</title>
        <authorList>
            <person name="Herbers K."/>
            <person name="Prat S."/>
            <person name="Willmitzer L."/>
        </authorList>
    </citation>
    <scope>NUCLEOTIDE SEQUENCE [MRNA]</scope>
    <source>
        <strain>cv. Desiree</strain>
    </source>
</reference>
<reference key="2">
    <citation type="journal article" date="1992" name="Plant Cell">
        <title>General roles of abscisic and jasmonic acids in gene activation as a result of mechanical wounding.</title>
        <authorList>
            <person name="Hildmann T."/>
            <person name="Ebneth M."/>
            <person name="Pena-Cortes H."/>
            <person name="Sanchez-Serrano J.J."/>
            <person name="Willmitzer L."/>
            <person name="Prat S."/>
        </authorList>
    </citation>
    <scope>NUCLEOTIDE SEQUENCE [MRNA] OF 19-573</scope>
    <source>
        <strain>cv. Desiree</strain>
        <tissue>Leaf</tissue>
    </source>
</reference>
<feature type="transit peptide" description="Chloroplast" evidence="4">
    <location>
        <begin position="1"/>
        <end position="53"/>
    </location>
</feature>
<feature type="chain" id="PRO_0000026805" description="Leucine aminopeptidase, chloroplastic">
    <location>
        <begin position="54"/>
        <end position="573"/>
    </location>
</feature>
<feature type="active site" evidence="4">
    <location>
        <position position="354"/>
    </location>
</feature>
<feature type="active site" evidence="4">
    <location>
        <position position="431"/>
    </location>
</feature>
<feature type="binding site" evidence="2">
    <location>
        <position position="342"/>
    </location>
    <ligand>
        <name>Mn(2+)</name>
        <dbReference type="ChEBI" id="CHEBI:29035"/>
        <label>1</label>
    </ligand>
</feature>
<feature type="binding site" evidence="2">
    <location>
        <position position="347"/>
    </location>
    <ligand>
        <name>Mn(2+)</name>
        <dbReference type="ChEBI" id="CHEBI:29035"/>
        <label>1</label>
    </ligand>
</feature>
<feature type="binding site" evidence="2">
    <location>
        <position position="347"/>
    </location>
    <ligand>
        <name>Mn(2+)</name>
        <dbReference type="ChEBI" id="CHEBI:29035"/>
        <label>2</label>
    </ligand>
</feature>
<feature type="binding site" evidence="2">
    <location>
        <position position="367"/>
    </location>
    <ligand>
        <name>Mn(2+)</name>
        <dbReference type="ChEBI" id="CHEBI:29035"/>
        <label>1</label>
    </ligand>
</feature>
<feature type="binding site" evidence="2">
    <location>
        <position position="427"/>
    </location>
    <ligand>
        <name>Mn(2+)</name>
        <dbReference type="ChEBI" id="CHEBI:29035"/>
        <label>2</label>
    </ligand>
</feature>
<feature type="binding site" evidence="2">
    <location>
        <position position="429"/>
    </location>
    <ligand>
        <name>Mn(2+)</name>
        <dbReference type="ChEBI" id="CHEBI:29035"/>
        <label>1</label>
    </ligand>
</feature>
<feature type="binding site" evidence="2">
    <location>
        <position position="429"/>
    </location>
    <ligand>
        <name>Mn(2+)</name>
        <dbReference type="ChEBI" id="CHEBI:29035"/>
        <label>2</label>
    </ligand>
</feature>
<accession>P31427</accession>
<sequence>MATLRVSSLLASSPSSLHCNPSVFTKCQSSPRWAFSFSVTPLCSRRSKRIVHCIAGDTLGLTRPNESDAPKISIGAKDTDVVQWQGDLLAIGATENDLARDDNSKFKNPLLQRLDSKLNGLLSAASSEEDFSGKSGQSINLRLPGGRITLVGLGSSASSPTSYHSLGEAAAAAAKSAQARNIAVSLASTDGLSAESKINSASAIATGVMLGIFEDNRFRSESKTPALESLDILGLGTGPEIESKIKYAEHVCAGVILGRELVNAPANIVTPGALAEEAKKIASTYSDVITVNILDAEQCKELKMGAYLGVAAAATENPPYFIHLCFKTNSRERKTKIALVGKGLTFDSGGYNLKTGAGSKIELMKNDMGGAAAVLGAAKALGEIKPRGVEVHFIVAACENMISGAGMRPGDIVTASNGKTIEVNNTDAEGRLTLADALIYACNQGVEKIIDLATLTGAIVTALGPSVAGAFTPSDGLAREVVVAAEASGEKLWRMPMEESYWESMKSGVADMINTGPRDGGAITGALFLKQFVDEKVQWLHLDIAGPVWSDEKKNATGYGVSTLVEWVLRNSL</sequence>
<proteinExistence type="evidence at transcript level"/>
<comment type="function">
    <text>Presumably involved in the processing and regular turnover of intracellular proteins.</text>
</comment>
<comment type="catalytic activity">
    <reaction>
        <text>Release of an N-terminal amino acid, Xaa-|-Yaa-, in which Xaa is preferably Leu, but may be other amino acids including Pro although not Arg or Lys, and Yaa may be Pro. Amino acid amides and methyl esters are also readily hydrolyzed, but rates on arylamides are exceedingly low.</text>
        <dbReference type="EC" id="3.4.11.1"/>
    </reaction>
</comment>
<comment type="catalytic activity">
    <reaction>
        <text>Release of N-terminal proline from a peptide.</text>
        <dbReference type="EC" id="3.4.11.5"/>
    </reaction>
</comment>
<comment type="cofactor">
    <cofactor evidence="2">
        <name>Mn(2+)</name>
        <dbReference type="ChEBI" id="CHEBI:29035"/>
    </cofactor>
    <text evidence="2">Binds 2 Mn(2+) ions per subunit.</text>
</comment>
<comment type="subunit">
    <text evidence="3">Homohexamer (dimer of homotrimers).</text>
</comment>
<comment type="subcellular location">
    <subcellularLocation>
        <location evidence="1">Plastid</location>
        <location evidence="1">Chloroplast</location>
    </subcellularLocation>
</comment>
<comment type="tissue specificity">
    <text>In tubers and floral buds of untreated plants. After abscisic acid (ABA) treatment or mechanical wounding is mostly accumulated in leaves, to a lesser extent in stems, but not in roots.</text>
</comment>
<comment type="induction">
    <text>By abscisic acid (ABA), jasmonic acid (JA) and wounding.</text>
</comment>
<comment type="similarity">
    <text evidence="5">Belongs to the peptidase M17 family.</text>
</comment>
<keyword id="KW-0031">Aminopeptidase</keyword>
<keyword id="KW-0150">Chloroplast</keyword>
<keyword id="KW-0378">Hydrolase</keyword>
<keyword id="KW-0464">Manganese</keyword>
<keyword id="KW-0479">Metal-binding</keyword>
<keyword id="KW-0934">Plastid</keyword>
<keyword id="KW-0645">Protease</keyword>
<keyword id="KW-1185">Reference proteome</keyword>
<keyword id="KW-0346">Stress response</keyword>
<keyword id="KW-0809">Transit peptide</keyword>
<organism>
    <name type="scientific">Solanum tuberosum</name>
    <name type="common">Potato</name>
    <dbReference type="NCBI Taxonomy" id="4113"/>
    <lineage>
        <taxon>Eukaryota</taxon>
        <taxon>Viridiplantae</taxon>
        <taxon>Streptophyta</taxon>
        <taxon>Embryophyta</taxon>
        <taxon>Tracheophyta</taxon>
        <taxon>Spermatophyta</taxon>
        <taxon>Magnoliopsida</taxon>
        <taxon>eudicotyledons</taxon>
        <taxon>Gunneridae</taxon>
        <taxon>Pentapetalae</taxon>
        <taxon>asterids</taxon>
        <taxon>lamiids</taxon>
        <taxon>Solanales</taxon>
        <taxon>Solanaceae</taxon>
        <taxon>Solanoideae</taxon>
        <taxon>Solaneae</taxon>
        <taxon>Solanum</taxon>
    </lineage>
</organism>
<name>AMPL_SOLTU</name>
<protein>
    <recommendedName>
        <fullName>Leucine aminopeptidase, chloroplastic</fullName>
        <ecNumber>3.4.11.1</ecNumber>
    </recommendedName>
    <alternativeName>
        <fullName>Leucyl aminopeptidase</fullName>
        <shortName>LAP</shortName>
    </alternativeName>
    <alternativeName>
        <fullName>Proline aminopeptidase</fullName>
        <ecNumber>3.4.11.5</ecNumber>
    </alternativeName>
    <alternativeName>
        <fullName>Prolyl aminopeptidase</fullName>
    </alternativeName>
</protein>
<gene>
    <name type="primary">LAP</name>
</gene>